<dbReference type="EMBL" id="AK095478">
    <property type="protein sequence ID" value="BAC04556.1"/>
    <property type="molecule type" value="mRNA"/>
</dbReference>
<dbReference type="EMBL" id="BC044814">
    <property type="protein sequence ID" value="AAH44814.1"/>
    <property type="molecule type" value="mRNA"/>
</dbReference>
<dbReference type="CCDS" id="CCDS8270.1"/>
<dbReference type="RefSeq" id="NP_689936.1">
    <property type="nucleotide sequence ID" value="NM_152723.3"/>
</dbReference>
<dbReference type="PDB" id="8WQA">
    <property type="method" value="EM"/>
    <property type="resolution" value="3.39 A"/>
    <property type="chains" value="K/L=352-374"/>
</dbReference>
<dbReference type="PDB" id="8WQB">
    <property type="method" value="EM"/>
    <property type="resolution" value="3.37 A"/>
    <property type="chains" value="K=352-374"/>
</dbReference>
<dbReference type="PDB" id="8WQD">
    <property type="method" value="EM"/>
    <property type="resolution" value="3.55 A"/>
    <property type="chains" value="G=352-374"/>
</dbReference>
<dbReference type="PDB" id="8WQH">
    <property type="method" value="EM"/>
    <property type="resolution" value="3.44 A"/>
    <property type="chains" value="G/L=352-374"/>
</dbReference>
<dbReference type="PDBsum" id="8WQA"/>
<dbReference type="PDBsum" id="8WQB"/>
<dbReference type="PDBsum" id="8WQD"/>
<dbReference type="PDBsum" id="8WQH"/>
<dbReference type="EMDB" id="EMD-37736"/>
<dbReference type="EMDB" id="EMD-37737"/>
<dbReference type="EMDB" id="EMD-37740"/>
<dbReference type="EMDB" id="EMD-37745"/>
<dbReference type="SMR" id="Q8N998"/>
<dbReference type="BioGRID" id="128643">
    <property type="interactions" value="19"/>
</dbReference>
<dbReference type="FunCoup" id="Q8N998">
    <property type="interactions" value="23"/>
</dbReference>
<dbReference type="IntAct" id="Q8N998">
    <property type="interactions" value="17"/>
</dbReference>
<dbReference type="STRING" id="9606.ENSP00000320649"/>
<dbReference type="iPTMnet" id="Q8N998"/>
<dbReference type="PhosphoSitePlus" id="Q8N998"/>
<dbReference type="BioMuta" id="CCDC89"/>
<dbReference type="DMDM" id="74729632"/>
<dbReference type="jPOST" id="Q8N998"/>
<dbReference type="MassIVE" id="Q8N998"/>
<dbReference type="PaxDb" id="9606-ENSP00000320649"/>
<dbReference type="PeptideAtlas" id="Q8N998"/>
<dbReference type="ProteomicsDB" id="72509"/>
<dbReference type="Antibodypedia" id="49524">
    <property type="antibodies" value="76 antibodies from 10 providers"/>
</dbReference>
<dbReference type="DNASU" id="220388"/>
<dbReference type="Ensembl" id="ENST00000316398.5">
    <property type="protein sequence ID" value="ENSP00000320649.3"/>
    <property type="gene ID" value="ENSG00000179071.5"/>
</dbReference>
<dbReference type="GeneID" id="220388"/>
<dbReference type="KEGG" id="hsa:220388"/>
<dbReference type="MANE-Select" id="ENST00000316398.5">
    <property type="protein sequence ID" value="ENSP00000320649.3"/>
    <property type="RefSeq nucleotide sequence ID" value="NM_152723.3"/>
    <property type="RefSeq protein sequence ID" value="NP_689936.1"/>
</dbReference>
<dbReference type="UCSC" id="uc001pau.2">
    <property type="organism name" value="human"/>
</dbReference>
<dbReference type="AGR" id="HGNC:26762"/>
<dbReference type="CTD" id="220388"/>
<dbReference type="DisGeNET" id="220388"/>
<dbReference type="GeneCards" id="CCDC89"/>
<dbReference type="HGNC" id="HGNC:26762">
    <property type="gene designation" value="CCDC89"/>
</dbReference>
<dbReference type="HPA" id="ENSG00000179071">
    <property type="expression patterns" value="Tissue enriched (testis)"/>
</dbReference>
<dbReference type="neXtProt" id="NX_Q8N998"/>
<dbReference type="OpenTargets" id="ENSG00000179071"/>
<dbReference type="PharmGKB" id="PA144596457"/>
<dbReference type="VEuPathDB" id="HostDB:ENSG00000179071"/>
<dbReference type="eggNOG" id="ENOG502QU10">
    <property type="taxonomic scope" value="Eukaryota"/>
</dbReference>
<dbReference type="GeneTree" id="ENSGT00390000016046"/>
<dbReference type="HOGENOM" id="CLU_066884_0_0_1"/>
<dbReference type="InParanoid" id="Q8N998"/>
<dbReference type="OMA" id="AMLCSRI"/>
<dbReference type="OrthoDB" id="10020070at2759"/>
<dbReference type="PAN-GO" id="Q8N998">
    <property type="GO annotations" value="0 GO annotations based on evolutionary models"/>
</dbReference>
<dbReference type="PhylomeDB" id="Q8N998"/>
<dbReference type="TreeFam" id="TF333232"/>
<dbReference type="PathwayCommons" id="Q8N998"/>
<dbReference type="SignaLink" id="Q8N998"/>
<dbReference type="BioGRID-ORCS" id="220388">
    <property type="hits" value="13 hits in 1143 CRISPR screens"/>
</dbReference>
<dbReference type="GenomeRNAi" id="220388"/>
<dbReference type="Pharos" id="Q8N998">
    <property type="development level" value="Tbio"/>
</dbReference>
<dbReference type="PRO" id="PR:Q8N998"/>
<dbReference type="Proteomes" id="UP000005640">
    <property type="component" value="Chromosome 11"/>
</dbReference>
<dbReference type="RNAct" id="Q8N998">
    <property type="molecule type" value="protein"/>
</dbReference>
<dbReference type="Bgee" id="ENSG00000179071">
    <property type="expression patterns" value="Expressed in left testis and 97 other cell types or tissues"/>
</dbReference>
<dbReference type="GO" id="GO:0005737">
    <property type="term" value="C:cytoplasm"/>
    <property type="evidence" value="ECO:0007669"/>
    <property type="project" value="UniProtKB-SubCell"/>
</dbReference>
<dbReference type="GO" id="GO:0005634">
    <property type="term" value="C:nucleus"/>
    <property type="evidence" value="ECO:0007669"/>
    <property type="project" value="UniProtKB-SubCell"/>
</dbReference>
<dbReference type="InterPro" id="IPR043450">
    <property type="entry name" value="CCDC89-like"/>
</dbReference>
<dbReference type="PANTHER" id="PTHR34768">
    <property type="entry name" value="COILED-COIL DOMAIN-CONTAINING PROTEIN 89"/>
    <property type="match status" value="1"/>
</dbReference>
<dbReference type="PANTHER" id="PTHR34768:SF1">
    <property type="entry name" value="COILED-COIL DOMAIN-CONTAINING PROTEIN 89"/>
    <property type="match status" value="1"/>
</dbReference>
<accession>Q8N998</accession>
<comment type="subunit">
    <text evidence="1">Interacts with HEY1.</text>
</comment>
<comment type="interaction">
    <interactant intactId="EBI-12814117">
        <id>Q8N998</id>
    </interactant>
    <interactant intactId="EBI-742802">
        <id>Q9Y247</id>
        <label>FAM50B</label>
    </interactant>
    <organismsDiffer>false</organismsDiffer>
    <experiments>3</experiments>
</comment>
<comment type="interaction">
    <interactant intactId="EBI-12814117">
        <id>Q8N998</id>
    </interactant>
    <interactant intactId="EBI-2805176">
        <id>Q96CN5</id>
        <label>LRRC45</label>
    </interactant>
    <organismsDiffer>false</organismsDiffer>
    <experiments>3</experiments>
</comment>
<comment type="interaction">
    <interactant intactId="EBI-12814117">
        <id>Q8N998</id>
    </interactant>
    <interactant intactId="EBI-79893">
        <id>Q92569</id>
        <label>PIK3R3</label>
    </interactant>
    <organismsDiffer>false</organismsDiffer>
    <experiments>3</experiments>
</comment>
<comment type="interaction">
    <interactant intactId="EBI-12814117">
        <id>Q8N998</id>
    </interactant>
    <interactant intactId="EBI-1049298">
        <id>P43897</id>
        <label>TSFM</label>
    </interactant>
    <organismsDiffer>false</organismsDiffer>
    <experiments>3</experiments>
</comment>
<comment type="subcellular location">
    <subcellularLocation>
        <location evidence="1">Cytoplasm</location>
    </subcellularLocation>
    <subcellularLocation>
        <location evidence="1">Nucleus</location>
    </subcellularLocation>
    <text evidence="1">Uniformly distributed within the cell, but becomes recruited to the nucleus upon binding to HEY1.</text>
</comment>
<comment type="similarity">
    <text evidence="5">Belongs to the CCDC89 family.</text>
</comment>
<reference key="1">
    <citation type="journal article" date="2004" name="Nat. Genet.">
        <title>Complete sequencing and characterization of 21,243 full-length human cDNAs.</title>
        <authorList>
            <person name="Ota T."/>
            <person name="Suzuki Y."/>
            <person name="Nishikawa T."/>
            <person name="Otsuki T."/>
            <person name="Sugiyama T."/>
            <person name="Irie R."/>
            <person name="Wakamatsu A."/>
            <person name="Hayashi K."/>
            <person name="Sato H."/>
            <person name="Nagai K."/>
            <person name="Kimura K."/>
            <person name="Makita H."/>
            <person name="Sekine M."/>
            <person name="Obayashi M."/>
            <person name="Nishi T."/>
            <person name="Shibahara T."/>
            <person name="Tanaka T."/>
            <person name="Ishii S."/>
            <person name="Yamamoto J."/>
            <person name="Saito K."/>
            <person name="Kawai Y."/>
            <person name="Isono Y."/>
            <person name="Nakamura Y."/>
            <person name="Nagahari K."/>
            <person name="Murakami K."/>
            <person name="Yasuda T."/>
            <person name="Iwayanagi T."/>
            <person name="Wagatsuma M."/>
            <person name="Shiratori A."/>
            <person name="Sudo H."/>
            <person name="Hosoiri T."/>
            <person name="Kaku Y."/>
            <person name="Kodaira H."/>
            <person name="Kondo H."/>
            <person name="Sugawara M."/>
            <person name="Takahashi M."/>
            <person name="Kanda K."/>
            <person name="Yokoi T."/>
            <person name="Furuya T."/>
            <person name="Kikkawa E."/>
            <person name="Omura Y."/>
            <person name="Abe K."/>
            <person name="Kamihara K."/>
            <person name="Katsuta N."/>
            <person name="Sato K."/>
            <person name="Tanikawa M."/>
            <person name="Yamazaki M."/>
            <person name="Ninomiya K."/>
            <person name="Ishibashi T."/>
            <person name="Yamashita H."/>
            <person name="Murakawa K."/>
            <person name="Fujimori K."/>
            <person name="Tanai H."/>
            <person name="Kimata M."/>
            <person name="Watanabe M."/>
            <person name="Hiraoka S."/>
            <person name="Chiba Y."/>
            <person name="Ishida S."/>
            <person name="Ono Y."/>
            <person name="Takiguchi S."/>
            <person name="Watanabe S."/>
            <person name="Yosida M."/>
            <person name="Hotuta T."/>
            <person name="Kusano J."/>
            <person name="Kanehori K."/>
            <person name="Takahashi-Fujii A."/>
            <person name="Hara H."/>
            <person name="Tanase T.-O."/>
            <person name="Nomura Y."/>
            <person name="Togiya S."/>
            <person name="Komai F."/>
            <person name="Hara R."/>
            <person name="Takeuchi K."/>
            <person name="Arita M."/>
            <person name="Imose N."/>
            <person name="Musashino K."/>
            <person name="Yuuki H."/>
            <person name="Oshima A."/>
            <person name="Sasaki N."/>
            <person name="Aotsuka S."/>
            <person name="Yoshikawa Y."/>
            <person name="Matsunawa H."/>
            <person name="Ichihara T."/>
            <person name="Shiohata N."/>
            <person name="Sano S."/>
            <person name="Moriya S."/>
            <person name="Momiyama H."/>
            <person name="Satoh N."/>
            <person name="Takami S."/>
            <person name="Terashima Y."/>
            <person name="Suzuki O."/>
            <person name="Nakagawa S."/>
            <person name="Senoh A."/>
            <person name="Mizoguchi H."/>
            <person name="Goto Y."/>
            <person name="Shimizu F."/>
            <person name="Wakebe H."/>
            <person name="Hishigaki H."/>
            <person name="Watanabe T."/>
            <person name="Sugiyama A."/>
            <person name="Takemoto M."/>
            <person name="Kawakami B."/>
            <person name="Yamazaki M."/>
            <person name="Watanabe K."/>
            <person name="Kumagai A."/>
            <person name="Itakura S."/>
            <person name="Fukuzumi Y."/>
            <person name="Fujimori Y."/>
            <person name="Komiyama M."/>
            <person name="Tashiro H."/>
            <person name="Tanigami A."/>
            <person name="Fujiwara T."/>
            <person name="Ono T."/>
            <person name="Yamada K."/>
            <person name="Fujii Y."/>
            <person name="Ozaki K."/>
            <person name="Hirao M."/>
            <person name="Ohmori Y."/>
            <person name="Kawabata A."/>
            <person name="Hikiji T."/>
            <person name="Kobatake N."/>
            <person name="Inagaki H."/>
            <person name="Ikema Y."/>
            <person name="Okamoto S."/>
            <person name="Okitani R."/>
            <person name="Kawakami T."/>
            <person name="Noguchi S."/>
            <person name="Itoh T."/>
            <person name="Shigeta K."/>
            <person name="Senba T."/>
            <person name="Matsumura K."/>
            <person name="Nakajima Y."/>
            <person name="Mizuno T."/>
            <person name="Morinaga M."/>
            <person name="Sasaki M."/>
            <person name="Togashi T."/>
            <person name="Oyama M."/>
            <person name="Hata H."/>
            <person name="Watanabe M."/>
            <person name="Komatsu T."/>
            <person name="Mizushima-Sugano J."/>
            <person name="Satoh T."/>
            <person name="Shirai Y."/>
            <person name="Takahashi Y."/>
            <person name="Nakagawa K."/>
            <person name="Okumura K."/>
            <person name="Nagase T."/>
            <person name="Nomura N."/>
            <person name="Kikuchi H."/>
            <person name="Masuho Y."/>
            <person name="Yamashita R."/>
            <person name="Nakai K."/>
            <person name="Yada T."/>
            <person name="Nakamura Y."/>
            <person name="Ohara O."/>
            <person name="Isogai T."/>
            <person name="Sugano S."/>
        </authorList>
    </citation>
    <scope>NUCLEOTIDE SEQUENCE [LARGE SCALE MRNA]</scope>
    <source>
        <tissue>Neonatal skin</tissue>
    </source>
</reference>
<reference key="2">
    <citation type="journal article" date="2004" name="Genome Res.">
        <title>The status, quality, and expansion of the NIH full-length cDNA project: the Mammalian Gene Collection (MGC).</title>
        <authorList>
            <consortium name="The MGC Project Team"/>
        </authorList>
    </citation>
    <scope>NUCLEOTIDE SEQUENCE [LARGE SCALE MRNA]</scope>
    <source>
        <tissue>Brain</tissue>
    </source>
</reference>
<reference key="3">
    <citation type="journal article" date="2003" name="Dev. Dyn.">
        <title>Identification of BOIP, a novel cDNA highly expressed during spermatogenesis that encodes a protein interacting with the orange domain of the hairy-related transcription factor HRT1/Hey1 in Xenopus and mouse.</title>
        <authorList>
            <person name="Van Wayenbergh R."/>
            <person name="Taelman V."/>
            <person name="Pichon B."/>
            <person name="Fischer A."/>
            <person name="Kricha S."/>
            <person name="Gessler M."/>
            <person name="Christophe D."/>
            <person name="Bellefroid E.J."/>
        </authorList>
    </citation>
    <scope>IDENTIFICATION</scope>
</reference>
<organism>
    <name type="scientific">Homo sapiens</name>
    <name type="common">Human</name>
    <dbReference type="NCBI Taxonomy" id="9606"/>
    <lineage>
        <taxon>Eukaryota</taxon>
        <taxon>Metazoa</taxon>
        <taxon>Chordata</taxon>
        <taxon>Craniata</taxon>
        <taxon>Vertebrata</taxon>
        <taxon>Euteleostomi</taxon>
        <taxon>Mammalia</taxon>
        <taxon>Eutheria</taxon>
        <taxon>Euarchontoglires</taxon>
        <taxon>Primates</taxon>
        <taxon>Haplorrhini</taxon>
        <taxon>Catarrhini</taxon>
        <taxon>Hominidae</taxon>
        <taxon>Homo</taxon>
    </lineage>
</organism>
<sequence length="374" mass="43809">MRAPMLQKQQAPRMDTPPPEERLEKQNEKLNNQEEETEFKELDGLREALANLRGLSEEERSEKAMLRSRIEEQSQLICILKRRSDEALERCQILELLNAELEEKMMQEAEKLKAQGEYSRKLEERFMTLAANHELMLRFKDEYKSENIKLREENEKLRLENSSLFSQALKDEEAKVLQLTVRCEALTGELETLKERCAQDACQAQAREKELLELQSQQACTHTKETEQLRSQLQTLKQQHQQAVEQIAKAEETHSSLSQELQARLQTVTREKEELLQLSIERGKVLQNKQAEICQLEEKLEIANEDRKHALERFEQEAVAVDSNLRVRELQRKVDGIQKAYDELRLQSEAFKKHSLDLLSKERELNGKLRHLSP</sequence>
<proteinExistence type="evidence at protein level"/>
<evidence type="ECO:0000250" key="1"/>
<evidence type="ECO:0000250" key="2">
    <source>
        <dbReference type="UniProtKB" id="Q9DA73"/>
    </source>
</evidence>
<evidence type="ECO:0000255" key="3"/>
<evidence type="ECO:0000256" key="4">
    <source>
        <dbReference type="SAM" id="MobiDB-lite"/>
    </source>
</evidence>
<evidence type="ECO:0000305" key="5"/>
<evidence type="ECO:0007829" key="6">
    <source>
        <dbReference type="PDB" id="8WQB"/>
    </source>
</evidence>
<gene>
    <name type="primary">CCDC89</name>
    <name type="synonym">BOIP</name>
</gene>
<feature type="chain" id="PRO_0000271024" description="Coiled-coil domain-containing protein 89">
    <location>
        <begin position="1"/>
        <end position="374"/>
    </location>
</feature>
<feature type="region of interest" description="Disordered" evidence="4">
    <location>
        <begin position="1"/>
        <end position="40"/>
    </location>
</feature>
<feature type="coiled-coil region" evidence="3">
    <location>
        <begin position="20"/>
        <end position="351"/>
    </location>
</feature>
<feature type="compositionally biased region" description="Basic and acidic residues" evidence="4">
    <location>
        <begin position="19"/>
        <end position="32"/>
    </location>
</feature>
<feature type="modified residue" description="Phosphothreonine" evidence="2">
    <location>
        <position position="16"/>
    </location>
</feature>
<feature type="helix" evidence="6">
    <location>
        <begin position="354"/>
        <end position="357"/>
    </location>
</feature>
<feature type="turn" evidence="6">
    <location>
        <begin position="369"/>
        <end position="371"/>
    </location>
</feature>
<name>CCD89_HUMAN</name>
<protein>
    <recommendedName>
        <fullName>Coiled-coil domain-containing protein 89</fullName>
    </recommendedName>
    <alternativeName>
        <fullName>Bc8 orange-interacting protein</fullName>
    </alternativeName>
</protein>
<keyword id="KW-0002">3D-structure</keyword>
<keyword id="KW-0175">Coiled coil</keyword>
<keyword id="KW-0963">Cytoplasm</keyword>
<keyword id="KW-0539">Nucleus</keyword>
<keyword id="KW-0597">Phosphoprotein</keyword>
<keyword id="KW-1267">Proteomics identification</keyword>
<keyword id="KW-1185">Reference proteome</keyword>